<keyword id="KW-0007">Acetylation</keyword>
<keyword id="KW-0027">Amidation</keyword>
<keyword id="KW-0165">Cleavage on pair of basic residues</keyword>
<keyword id="KW-0903">Direct protein sequencing</keyword>
<keyword id="KW-0257">Endorphin</keyword>
<keyword id="KW-0325">Glycoprotein</keyword>
<keyword id="KW-0372">Hormone</keyword>
<keyword id="KW-0597">Phosphoprotein</keyword>
<keyword id="KW-1185">Reference proteome</keyword>
<keyword id="KW-0964">Secreted</keyword>
<keyword id="KW-0732">Signal</keyword>
<protein>
    <recommendedName>
        <fullName>Pro-opiomelanocortin</fullName>
        <shortName>POMC</shortName>
    </recommendedName>
    <alternativeName>
        <fullName>Corticotropin-lipotropin</fullName>
    </alternativeName>
    <component>
        <recommendedName>
            <fullName>NPP</fullName>
        </recommendedName>
    </component>
    <component>
        <recommendedName>
            <fullName>Melanotropin gamma</fullName>
        </recommendedName>
        <alternativeName>
            <fullName>Gamma-MSH</fullName>
        </alternativeName>
    </component>
    <component>
        <recommendedName>
            <fullName>Potential peptide</fullName>
        </recommendedName>
    </component>
    <component>
        <recommendedName>
            <fullName>Corticotropin</fullName>
        </recommendedName>
        <alternativeName>
            <fullName>Adrenocorticotropic hormone</fullName>
            <shortName>ACTH</shortName>
        </alternativeName>
    </component>
    <component>
        <recommendedName>
            <fullName>Melanocyte-stimulating hormone alpha</fullName>
            <shortName>Alpha-MSH</shortName>
        </recommendedName>
        <alternativeName>
            <fullName>Melanotropin alpha</fullName>
        </alternativeName>
    </component>
    <component>
        <recommendedName>
            <fullName>Corticotropin-like intermediary peptide</fullName>
            <shortName>CLIP</shortName>
        </recommendedName>
    </component>
    <component>
        <recommendedName>
            <fullName>Lipotropin beta</fullName>
        </recommendedName>
        <alternativeName>
            <fullName>Beta-LPH</fullName>
        </alternativeName>
    </component>
    <component>
        <recommendedName>
            <fullName>Lipotropin gamma</fullName>
        </recommendedName>
        <alternativeName>
            <fullName>Gamma-LPH</fullName>
        </alternativeName>
    </component>
    <component>
        <recommendedName>
            <fullName>Melanocyte-stimulating hormone beta</fullName>
            <shortName>Beta-MSH</shortName>
        </recommendedName>
        <alternativeName>
            <fullName>Melanotropin beta</fullName>
        </alternativeName>
    </component>
    <component>
        <recommendedName>
            <fullName>Beta-endorphin</fullName>
        </recommendedName>
    </component>
    <component>
        <recommendedName>
            <fullName>Met-enkephalin</fullName>
        </recommendedName>
    </component>
</protein>
<dbReference type="EMBL" id="X03176">
    <property type="protein sequence ID" value="CAA26937.1"/>
    <property type="molecule type" value="Genomic_DNA"/>
</dbReference>
<dbReference type="EMBL" id="K01877">
    <property type="status" value="NOT_ANNOTATED_CDS"/>
    <property type="molecule type" value="Genomic_DNA"/>
</dbReference>
<dbReference type="EMBL" id="J00759">
    <property type="protein sequence ID" value="AAA41903.1"/>
    <property type="molecule type" value="Genomic_DNA"/>
</dbReference>
<dbReference type="EMBL" id="K01878">
    <property type="protein sequence ID" value="AAA41903.1"/>
    <property type="status" value="JOINED"/>
    <property type="molecule type" value="Genomic_DNA"/>
</dbReference>
<dbReference type="PIR" id="A91353">
    <property type="entry name" value="CTRTP"/>
</dbReference>
<dbReference type="SMR" id="P01194"/>
<dbReference type="FunCoup" id="P01194">
    <property type="interactions" value="54"/>
</dbReference>
<dbReference type="STRING" id="10116.ENSRNOP00000016976"/>
<dbReference type="GlyCosmos" id="P01194">
    <property type="glycosylation" value="1 site, No reported glycans"/>
</dbReference>
<dbReference type="GlyGen" id="P01194">
    <property type="glycosylation" value="1 site"/>
</dbReference>
<dbReference type="PhosphoSitePlus" id="P01194"/>
<dbReference type="PaxDb" id="10116-ENSRNOP00000016976"/>
<dbReference type="AGR" id="RGD:3366"/>
<dbReference type="RGD" id="3366">
    <property type="gene designation" value="Pomc"/>
</dbReference>
<dbReference type="eggNOG" id="ENOG502RZNY">
    <property type="taxonomic scope" value="Eukaryota"/>
</dbReference>
<dbReference type="InParanoid" id="P01194"/>
<dbReference type="PhylomeDB" id="P01194"/>
<dbReference type="Reactome" id="R-RNO-111885">
    <property type="pathway name" value="Opioid Signalling"/>
</dbReference>
<dbReference type="Reactome" id="R-RNO-193048">
    <property type="pathway name" value="Androgen biosynthesis"/>
</dbReference>
<dbReference type="Reactome" id="R-RNO-194002">
    <property type="pathway name" value="Glucocorticoid biosynthesis"/>
</dbReference>
<dbReference type="Reactome" id="R-RNO-202040">
    <property type="pathway name" value="G-protein activation"/>
</dbReference>
<dbReference type="Reactome" id="R-RNO-209952">
    <property type="pathway name" value="Peptide hormone biosynthesis"/>
</dbReference>
<dbReference type="Reactome" id="R-RNO-211976">
    <property type="pathway name" value="Endogenous sterols"/>
</dbReference>
<dbReference type="Reactome" id="R-RNO-375276">
    <property type="pathway name" value="Peptide ligand-binding receptors"/>
</dbReference>
<dbReference type="Reactome" id="R-RNO-418594">
    <property type="pathway name" value="G alpha (i) signalling events"/>
</dbReference>
<dbReference type="PRO" id="PR:P01194"/>
<dbReference type="Proteomes" id="UP000002494">
    <property type="component" value="Unplaced"/>
</dbReference>
<dbReference type="GO" id="GO:0005737">
    <property type="term" value="C:cytoplasm"/>
    <property type="evidence" value="ECO:0000266"/>
    <property type="project" value="RGD"/>
</dbReference>
<dbReference type="GO" id="GO:0005576">
    <property type="term" value="C:extracellular region"/>
    <property type="evidence" value="ECO:0000314"/>
    <property type="project" value="RGD"/>
</dbReference>
<dbReference type="GO" id="GO:0005615">
    <property type="term" value="C:extracellular space"/>
    <property type="evidence" value="ECO:0000266"/>
    <property type="project" value="RGD"/>
</dbReference>
<dbReference type="GO" id="GO:0043025">
    <property type="term" value="C:neuronal cell body"/>
    <property type="evidence" value="ECO:0000314"/>
    <property type="project" value="RGD"/>
</dbReference>
<dbReference type="GO" id="GO:0005782">
    <property type="term" value="C:peroxisomal matrix"/>
    <property type="evidence" value="ECO:0000266"/>
    <property type="project" value="RGD"/>
</dbReference>
<dbReference type="GO" id="GO:0030141">
    <property type="term" value="C:secretory granule"/>
    <property type="evidence" value="ECO:0000266"/>
    <property type="project" value="RGD"/>
</dbReference>
<dbReference type="GO" id="GO:0001664">
    <property type="term" value="F:G protein-coupled receptor binding"/>
    <property type="evidence" value="ECO:0000266"/>
    <property type="project" value="RGD"/>
</dbReference>
<dbReference type="GO" id="GO:0005179">
    <property type="term" value="F:hormone activity"/>
    <property type="evidence" value="ECO:0000266"/>
    <property type="project" value="RGD"/>
</dbReference>
<dbReference type="GO" id="GO:0005102">
    <property type="term" value="F:signaling receptor binding"/>
    <property type="evidence" value="ECO:0000266"/>
    <property type="project" value="RGD"/>
</dbReference>
<dbReference type="GO" id="GO:0070996">
    <property type="term" value="F:type 1 melanocortin receptor binding"/>
    <property type="evidence" value="ECO:0000266"/>
    <property type="project" value="RGD"/>
</dbReference>
<dbReference type="GO" id="GO:0031781">
    <property type="term" value="F:type 3 melanocortin receptor binding"/>
    <property type="evidence" value="ECO:0000266"/>
    <property type="project" value="RGD"/>
</dbReference>
<dbReference type="GO" id="GO:0031782">
    <property type="term" value="F:type 4 melanocortin receptor binding"/>
    <property type="evidence" value="ECO:0000266"/>
    <property type="project" value="RGD"/>
</dbReference>
<dbReference type="GO" id="GO:0019722">
    <property type="term" value="P:calcium-mediated signaling"/>
    <property type="evidence" value="ECO:0000266"/>
    <property type="project" value="RGD"/>
</dbReference>
<dbReference type="GO" id="GO:0007267">
    <property type="term" value="P:cell-cell signaling"/>
    <property type="evidence" value="ECO:0000266"/>
    <property type="project" value="RGD"/>
</dbReference>
<dbReference type="GO" id="GO:0033059">
    <property type="term" value="P:cellular pigmentation"/>
    <property type="evidence" value="ECO:0000266"/>
    <property type="project" value="RGD"/>
</dbReference>
<dbReference type="GO" id="GO:0006091">
    <property type="term" value="P:generation of precursor metabolites and energy"/>
    <property type="evidence" value="ECO:0000266"/>
    <property type="project" value="RGD"/>
</dbReference>
<dbReference type="GO" id="GO:0042593">
    <property type="term" value="P:glucose homeostasis"/>
    <property type="evidence" value="ECO:0000266"/>
    <property type="project" value="RGD"/>
</dbReference>
<dbReference type="GO" id="GO:0061744">
    <property type="term" value="P:motor behavior"/>
    <property type="evidence" value="ECO:0000314"/>
    <property type="project" value="RGD"/>
</dbReference>
<dbReference type="GO" id="GO:0043066">
    <property type="term" value="P:negative regulation of apoptotic process"/>
    <property type="evidence" value="ECO:0000314"/>
    <property type="project" value="RGD"/>
</dbReference>
<dbReference type="GO" id="GO:0002862">
    <property type="term" value="P:negative regulation of inflammatory response to antigenic stimulus"/>
    <property type="evidence" value="ECO:0000315"/>
    <property type="project" value="RGD"/>
</dbReference>
<dbReference type="GO" id="GO:0032720">
    <property type="term" value="P:negative regulation of tumor necrosis factor production"/>
    <property type="evidence" value="ECO:0000266"/>
    <property type="project" value="RGD"/>
</dbReference>
<dbReference type="GO" id="GO:0007218">
    <property type="term" value="P:neuropeptide signaling pathway"/>
    <property type="evidence" value="ECO:0007669"/>
    <property type="project" value="UniProtKB-KW"/>
</dbReference>
<dbReference type="GO" id="GO:0106071">
    <property type="term" value="P:positive regulation of adenylate cyclase-activating G protein-coupled receptor signaling pathway"/>
    <property type="evidence" value="ECO:0000266"/>
    <property type="project" value="RGD"/>
</dbReference>
<dbReference type="GO" id="GO:0008284">
    <property type="term" value="P:positive regulation of cell population proliferation"/>
    <property type="evidence" value="ECO:0000314"/>
    <property type="project" value="RGD"/>
</dbReference>
<dbReference type="GO" id="GO:0140668">
    <property type="term" value="P:positive regulation of oxytocin production"/>
    <property type="evidence" value="ECO:0000266"/>
    <property type="project" value="RGD"/>
</dbReference>
<dbReference type="GO" id="GO:0045944">
    <property type="term" value="P:positive regulation of transcription by RNA polymerase II"/>
    <property type="evidence" value="ECO:0000266"/>
    <property type="project" value="RGD"/>
</dbReference>
<dbReference type="GO" id="GO:0032098">
    <property type="term" value="P:regulation of appetite"/>
    <property type="evidence" value="ECO:0000266"/>
    <property type="project" value="RGD"/>
</dbReference>
<dbReference type="GO" id="GO:0008217">
    <property type="term" value="P:regulation of blood pressure"/>
    <property type="evidence" value="ECO:0000266"/>
    <property type="project" value="RGD"/>
</dbReference>
<dbReference type="GO" id="GO:2000852">
    <property type="term" value="P:regulation of corticosterone secretion"/>
    <property type="evidence" value="ECO:0000266"/>
    <property type="project" value="RGD"/>
</dbReference>
<dbReference type="GO" id="GO:0070873">
    <property type="term" value="P:regulation of glycogen metabolic process"/>
    <property type="evidence" value="ECO:0000266"/>
    <property type="project" value="RGD"/>
</dbReference>
<dbReference type="GO" id="GO:0045471">
    <property type="term" value="P:response to ethanol"/>
    <property type="evidence" value="ECO:0000270"/>
    <property type="project" value="RGD"/>
</dbReference>
<dbReference type="GO" id="GO:0032496">
    <property type="term" value="P:response to lipopolysaccharide"/>
    <property type="evidence" value="ECO:0000270"/>
    <property type="project" value="RGD"/>
</dbReference>
<dbReference type="GO" id="GO:1990680">
    <property type="term" value="P:response to melanocyte-stimulating hormone"/>
    <property type="evidence" value="ECO:0000266"/>
    <property type="project" value="RGD"/>
</dbReference>
<dbReference type="GO" id="GO:0007165">
    <property type="term" value="P:signal transduction"/>
    <property type="evidence" value="ECO:0000266"/>
    <property type="project" value="RGD"/>
</dbReference>
<dbReference type="InterPro" id="IPR013531">
    <property type="entry name" value="Mcrtin_ACTH_cent"/>
</dbReference>
<dbReference type="InterPro" id="IPR013593">
    <property type="entry name" value="Melanocortin_N"/>
</dbReference>
<dbReference type="InterPro" id="IPR013532">
    <property type="entry name" value="Opioid_neuropept"/>
</dbReference>
<dbReference type="InterPro" id="IPR001941">
    <property type="entry name" value="PMOC"/>
</dbReference>
<dbReference type="InterPro" id="IPR050878">
    <property type="entry name" value="POMC-derived_peptides"/>
</dbReference>
<dbReference type="PANTHER" id="PTHR11416">
    <property type="entry name" value="PRO-OPIOMELANOCORTIN"/>
    <property type="match status" value="1"/>
</dbReference>
<dbReference type="PANTHER" id="PTHR11416:SF7">
    <property type="entry name" value="PRO-OPIOMELANOCORTIN"/>
    <property type="match status" value="1"/>
</dbReference>
<dbReference type="Pfam" id="PF00976">
    <property type="entry name" value="ACTH_domain"/>
    <property type="match status" value="3"/>
</dbReference>
<dbReference type="Pfam" id="PF08384">
    <property type="entry name" value="NPP"/>
    <property type="match status" value="1"/>
</dbReference>
<dbReference type="Pfam" id="PF08035">
    <property type="entry name" value="Op_neuropeptide"/>
    <property type="match status" value="1"/>
</dbReference>
<dbReference type="PRINTS" id="PR00383">
    <property type="entry name" value="MELANOCORTIN"/>
</dbReference>
<dbReference type="SMART" id="SM01363">
    <property type="entry name" value="ACTH_domain"/>
    <property type="match status" value="2"/>
</dbReference>
<dbReference type="SMART" id="SM01364">
    <property type="entry name" value="NPP"/>
    <property type="match status" value="1"/>
</dbReference>
<dbReference type="SMART" id="SM01365">
    <property type="entry name" value="Op_neuropeptide"/>
    <property type="match status" value="1"/>
</dbReference>
<accession>P01194</accession>
<comment type="function">
    <molecule>Corticotropin</molecule>
    <text>Stimulates the adrenal glands to release cortisol.</text>
</comment>
<comment type="function">
    <molecule>Melanocyte-stimulating hormone alpha</molecule>
    <text>Anorexigenic peptide. Increases the pigmentation of skin by increasing melanin production in melanocytes.</text>
</comment>
<comment type="function">
    <molecule>Melanocyte-stimulating hormone beta</molecule>
    <text>Increases the pigmentation of skin by increasing melanin production in melanocytes.</text>
</comment>
<comment type="function">
    <molecule>Beta-endorphin</molecule>
    <text>Endogenous orexigenic opiate.</text>
</comment>
<comment type="function">
    <molecule>Met-enkephalin</molecule>
    <text>Endogenous opiate.</text>
</comment>
<comment type="subcellular location">
    <subcellularLocation>
        <location evidence="4">Secreted</location>
    </subcellularLocation>
    <text evidence="4">Melanocyte-stimulating hormone alpha and beta-endorphin are stored in separate granules in hypothalamic POMC neurons, suggesting that secretion may be under the control of different regulatory mechanisms.</text>
</comment>
<comment type="tissue specificity">
    <text>ACTH and MSH are produced by the pituitary gland.</text>
</comment>
<comment type="PTM">
    <text>Specific enzymatic cleavages at paired basic residues yield the different active peptides.</text>
</comment>
<comment type="similarity">
    <text evidence="6">Belongs to the POMC family.</text>
</comment>
<organism>
    <name type="scientific">Rattus norvegicus</name>
    <name type="common">Rat</name>
    <dbReference type="NCBI Taxonomy" id="10116"/>
    <lineage>
        <taxon>Eukaryota</taxon>
        <taxon>Metazoa</taxon>
        <taxon>Chordata</taxon>
        <taxon>Craniata</taxon>
        <taxon>Vertebrata</taxon>
        <taxon>Euteleostomi</taxon>
        <taxon>Mammalia</taxon>
        <taxon>Eutheria</taxon>
        <taxon>Euarchontoglires</taxon>
        <taxon>Glires</taxon>
        <taxon>Rodentia</taxon>
        <taxon>Myomorpha</taxon>
        <taxon>Muroidea</taxon>
        <taxon>Muridae</taxon>
        <taxon>Murinae</taxon>
        <taxon>Rattus</taxon>
    </lineage>
</organism>
<reference key="1">
    <citation type="journal article" date="1985" name="FEBS Lett.">
        <title>Structure of the rat pro-opiomelanocortin (POMC) gene.</title>
        <authorList>
            <person name="Drouin J."/>
            <person name="Chamberland M."/>
            <person name="Charron J."/>
            <person name="Jeannotte L."/>
            <person name="Nemer M."/>
        </authorList>
    </citation>
    <scope>NUCLEOTIDE SEQUENCE [GENOMIC DNA]</scope>
</reference>
<reference key="2">
    <citation type="journal article" date="1984" name="J. Biol. Chem.">
        <title>5' sequence of porcine and rat pro-opiomelanocortin mRNA. One porcine and two rat forms.</title>
        <authorList>
            <person name="Oates E."/>
            <person name="Herbert E."/>
        </authorList>
    </citation>
    <scope>NUCLEOTIDE SEQUENCE [GENOMIC DNA] OF 1-56</scope>
</reference>
<reference key="3">
    <citation type="journal article" date="1980" name="Nature">
        <title>Most of the coding region of rat ACTH beta-LPH precursor gene lacks intervening sequences.</title>
        <authorList>
            <person name="Drouin J."/>
            <person name="Goodman H.M."/>
        </authorList>
    </citation>
    <scope>NUCLEOTIDE SEQUENCE [GENOMIC DNA] OF 45-235</scope>
</reference>
<reference key="4">
    <citation type="journal article" date="1981" name="Biochem. Biophys. Res. Commun.">
        <title>The isolation of characterization of gamma 3-melanotropin from the neurointermediary lobe of the rat pituitary.</title>
        <authorList>
            <person name="Browne C.A."/>
            <person name="Bennett H.P."/>
            <person name="Solomon S."/>
        </authorList>
    </citation>
    <scope>PROTEIN SEQUENCE OF 76-100</scope>
    <source>
        <tissue>Pituitary</tissue>
    </source>
</reference>
<gene>
    <name type="primary">Pomc</name>
    <name type="synonym">Pomc2</name>
</gene>
<sequence>MPRFCNSRSGALLLALLLQTSIDVWSWCLESSQCQDLTTESNLLACIRACRLDLSAETPVFPGNGDEQPLTENPRKYVMGHFRWDRFGPRNSSSAGGSAQRRAEEETAGGDGRPEPSPREGKRSYSMEHFRWGKPVGKKRRPVKVYPNVAENESAEAFPLEFKRELEGEQPDGLEQVLEPDTEKADGPYRVEHFRWGNPPKDKRYGGFMTSEKSQTPLVTLFKNAIIKNVHKKGQ</sequence>
<evidence type="ECO:0000250" key="1"/>
<evidence type="ECO:0000250" key="2">
    <source>
        <dbReference type="UniProtKB" id="P01189"/>
    </source>
</evidence>
<evidence type="ECO:0000250" key="3">
    <source>
        <dbReference type="UniProtKB" id="P01191"/>
    </source>
</evidence>
<evidence type="ECO:0000250" key="4">
    <source>
        <dbReference type="UniProtKB" id="P01193"/>
    </source>
</evidence>
<evidence type="ECO:0000256" key="5">
    <source>
        <dbReference type="SAM" id="MobiDB-lite"/>
    </source>
</evidence>
<evidence type="ECO:0000305" key="6"/>
<name>COLI_RAT</name>
<proteinExistence type="evidence at protein level"/>
<feature type="signal peptide" evidence="1">
    <location>
        <begin position="1"/>
        <end position="26"/>
    </location>
</feature>
<feature type="peptide" id="PRO_0000025029" description="NPP">
    <location>
        <begin position="27"/>
        <end position="100"/>
    </location>
</feature>
<feature type="peptide" id="PRO_0000025030" description="Melanotropin gamma">
    <location>
        <begin position="77"/>
        <end position="87"/>
    </location>
</feature>
<feature type="peptide" id="PRO_0000437245" description="Potential peptide">
    <location>
        <begin position="101"/>
        <end position="123"/>
    </location>
</feature>
<feature type="peptide" id="PRO_0000025031" description="Corticotropin">
    <location>
        <begin position="124"/>
        <end position="162"/>
    </location>
</feature>
<feature type="peptide" id="PRO_0000025032" description="Melanocyte-stimulating hormone alpha">
    <location>
        <begin position="124"/>
        <end position="136"/>
    </location>
</feature>
<feature type="peptide" id="PRO_0000025033" description="Corticotropin-like intermediary peptide">
    <location>
        <begin position="142"/>
        <end position="162"/>
    </location>
</feature>
<feature type="peptide" id="PRO_0000025034" description="Lipotropin beta">
    <location>
        <begin position="165"/>
        <end position="235"/>
    </location>
</feature>
<feature type="peptide" id="PRO_0000025035" description="Lipotropin gamma">
    <location>
        <begin position="165"/>
        <end position="202"/>
    </location>
</feature>
<feature type="peptide" id="PRO_0000025036" description="Melanocyte-stimulating hormone beta">
    <location>
        <begin position="185"/>
        <end position="202"/>
    </location>
</feature>
<feature type="peptide" id="PRO_0000025037" description="Beta-endorphin">
    <location>
        <begin position="205"/>
        <end position="235"/>
    </location>
</feature>
<feature type="peptide" id="PRO_0000025038" description="Met-enkephalin">
    <location>
        <begin position="205"/>
        <end position="209"/>
    </location>
</feature>
<feature type="region of interest" description="Disordered" evidence="5">
    <location>
        <begin position="88"/>
        <end position="128"/>
    </location>
</feature>
<feature type="region of interest" description="Disordered" evidence="5">
    <location>
        <begin position="169"/>
        <end position="209"/>
    </location>
</feature>
<feature type="compositionally biased region" description="Basic and acidic residues" evidence="5">
    <location>
        <begin position="112"/>
        <end position="128"/>
    </location>
</feature>
<feature type="compositionally biased region" description="Basic and acidic residues" evidence="5">
    <location>
        <begin position="181"/>
        <end position="205"/>
    </location>
</feature>
<feature type="modified residue" description="Phenylalanine amide" evidence="1">
    <location>
        <position position="87"/>
    </location>
</feature>
<feature type="modified residue" description="N-acetylserine; in Corticotropin" evidence="3">
    <location>
        <position position="124"/>
    </location>
</feature>
<feature type="modified residue" description="Valine amide" evidence="1">
    <location>
        <position position="136"/>
    </location>
</feature>
<feature type="modified residue" description="Phosphoserine" evidence="2">
    <location>
        <position position="154"/>
    </location>
</feature>
<feature type="glycosylation site" description="N-linked (GlcNAc...) asparagine" evidence="6">
    <location>
        <position position="152"/>
    </location>
</feature>
<feature type="sequence conflict" description="In Ref. 1; CAA26937/AAA41903." evidence="6" ref="1">
    <original>N</original>
    <variation>Y</variation>
    <location>
        <position position="6"/>
    </location>
</feature>
<feature type="sequence conflict" description="In Ref. 2." evidence="6" ref="2">
    <original>E</original>
    <variation>Y</variation>
    <location>
        <position position="40"/>
    </location>
</feature>